<organism>
    <name type="scientific">Hyphomonas neptunium (strain ATCC 15444)</name>
    <dbReference type="NCBI Taxonomy" id="228405"/>
    <lineage>
        <taxon>Bacteria</taxon>
        <taxon>Pseudomonadati</taxon>
        <taxon>Pseudomonadota</taxon>
        <taxon>Alphaproteobacteria</taxon>
        <taxon>Hyphomonadales</taxon>
        <taxon>Hyphomonadaceae</taxon>
        <taxon>Hyphomonas</taxon>
    </lineage>
</organism>
<comment type="function">
    <text evidence="1">Is required not only for elongation of protein synthesis but also for the initiation of all mRNA translation through initiator tRNA(fMet) aminoacylation.</text>
</comment>
<comment type="catalytic activity">
    <reaction evidence="1">
        <text>tRNA(Met) + L-methionine + ATP = L-methionyl-tRNA(Met) + AMP + diphosphate</text>
        <dbReference type="Rhea" id="RHEA:13481"/>
        <dbReference type="Rhea" id="RHEA-COMP:9667"/>
        <dbReference type="Rhea" id="RHEA-COMP:9698"/>
        <dbReference type="ChEBI" id="CHEBI:30616"/>
        <dbReference type="ChEBI" id="CHEBI:33019"/>
        <dbReference type="ChEBI" id="CHEBI:57844"/>
        <dbReference type="ChEBI" id="CHEBI:78442"/>
        <dbReference type="ChEBI" id="CHEBI:78530"/>
        <dbReference type="ChEBI" id="CHEBI:456215"/>
        <dbReference type="EC" id="6.1.1.10"/>
    </reaction>
</comment>
<comment type="cofactor">
    <cofactor evidence="1">
        <name>Zn(2+)</name>
        <dbReference type="ChEBI" id="CHEBI:29105"/>
    </cofactor>
    <text evidence="1">Binds 1 zinc ion per subunit.</text>
</comment>
<comment type="subunit">
    <text evidence="1">Monomer.</text>
</comment>
<comment type="subcellular location">
    <subcellularLocation>
        <location evidence="1">Cytoplasm</location>
    </subcellularLocation>
</comment>
<comment type="similarity">
    <text evidence="1">Belongs to the class-I aminoacyl-tRNA synthetase family. MetG type 1 subfamily.</text>
</comment>
<feature type="chain" id="PRO_0000331839" description="Methionine--tRNA ligase">
    <location>
        <begin position="1"/>
        <end position="579"/>
    </location>
</feature>
<feature type="short sequence motif" description="'HIGH' region">
    <location>
        <begin position="14"/>
        <end position="24"/>
    </location>
</feature>
<feature type="short sequence motif" description="'KMSKS' region">
    <location>
        <begin position="346"/>
        <end position="350"/>
    </location>
</feature>
<feature type="binding site" evidence="1">
    <location>
        <position position="146"/>
    </location>
    <ligand>
        <name>Zn(2+)</name>
        <dbReference type="ChEBI" id="CHEBI:29105"/>
    </ligand>
</feature>
<feature type="binding site" evidence="1">
    <location>
        <position position="149"/>
    </location>
    <ligand>
        <name>Zn(2+)</name>
        <dbReference type="ChEBI" id="CHEBI:29105"/>
    </ligand>
</feature>
<feature type="binding site" evidence="1">
    <location>
        <position position="159"/>
    </location>
    <ligand>
        <name>Zn(2+)</name>
        <dbReference type="ChEBI" id="CHEBI:29105"/>
    </ligand>
</feature>
<feature type="binding site" evidence="1">
    <location>
        <position position="162"/>
    </location>
    <ligand>
        <name>Zn(2+)</name>
        <dbReference type="ChEBI" id="CHEBI:29105"/>
    </ligand>
</feature>
<feature type="binding site" evidence="1">
    <location>
        <position position="349"/>
    </location>
    <ligand>
        <name>ATP</name>
        <dbReference type="ChEBI" id="CHEBI:30616"/>
    </ligand>
</feature>
<evidence type="ECO:0000255" key="1">
    <source>
        <dbReference type="HAMAP-Rule" id="MF_00098"/>
    </source>
</evidence>
<protein>
    <recommendedName>
        <fullName evidence="1">Methionine--tRNA ligase</fullName>
        <ecNumber evidence="1">6.1.1.10</ecNumber>
    </recommendedName>
    <alternativeName>
        <fullName evidence="1">Methionyl-tRNA synthetase</fullName>
        <shortName evidence="1">MetRS</shortName>
    </alternativeName>
</protein>
<sequence>MTQQRRILITSALPYINGVKHLGNLAGSMLPADVYARVMRLQGHDVTYICATDEHGTPAELAAQATGQSVQAYCDEQYEVQRKAGEGFNLSFDWFGRTSRPANHTLTQHLAQQLEKNGLIEVRTSKQVYAVDDGRFLPDRYVEGTCPHCGYEKARGDQCDNCGRLLDPVDLINPYSAVSGSRNIEIRDTDHLYLLQTGMQDRIRDWVNAKGKNWPSLAVSIANKWLDEGLIARSISRDLSWGVKVTDADGNPRPGFENKVFYVWFDAPIGYISATQEWAEATGNDWEKLWLTDKGADQTEYVQFMGKDNVAFHTVSFPVTLLGSGEPWKTVDKLKAFNWVTWYGGKFSTSQKRGVFMDQALSLLPSDYWRWYLISNAPEGSDAAFTWEGFQAAVNSDLANVLGNFINRITKYCASKFEGKIPETGTSGDAEAWMANELAERLPRLIEFYEAMEFRKAAAETRAIWAAGNEYLTKAEPWVKYKNDVDGAAVGVRAGINLAAIFGIIAQPIIPDAAKKILDALGIPEENRKMPAGSKPEDFAALLDAIPRGHAISPPDVLFQKIEDSQVEEWTAQFGGGKE</sequence>
<keyword id="KW-0030">Aminoacyl-tRNA synthetase</keyword>
<keyword id="KW-0067">ATP-binding</keyword>
<keyword id="KW-0963">Cytoplasm</keyword>
<keyword id="KW-0436">Ligase</keyword>
<keyword id="KW-0479">Metal-binding</keyword>
<keyword id="KW-0547">Nucleotide-binding</keyword>
<keyword id="KW-0648">Protein biosynthesis</keyword>
<keyword id="KW-1185">Reference proteome</keyword>
<keyword id="KW-0862">Zinc</keyword>
<accession>Q0C161</accession>
<proteinExistence type="inferred from homology"/>
<reference key="1">
    <citation type="journal article" date="2006" name="J. Bacteriol.">
        <title>Comparative genomic evidence for a close relationship between the dimorphic prosthecate bacteria Hyphomonas neptunium and Caulobacter crescentus.</title>
        <authorList>
            <person name="Badger J.H."/>
            <person name="Hoover T.R."/>
            <person name="Brun Y.V."/>
            <person name="Weiner R.M."/>
            <person name="Laub M.T."/>
            <person name="Alexandre G."/>
            <person name="Mrazek J."/>
            <person name="Ren Q."/>
            <person name="Paulsen I.T."/>
            <person name="Nelson K.E."/>
            <person name="Khouri H.M."/>
            <person name="Radune D."/>
            <person name="Sosa J."/>
            <person name="Dodson R.J."/>
            <person name="Sullivan S.A."/>
            <person name="Rosovitz M.J."/>
            <person name="Madupu R."/>
            <person name="Brinkac L.M."/>
            <person name="Durkin A.S."/>
            <person name="Daugherty S.C."/>
            <person name="Kothari S.P."/>
            <person name="Giglio M.G."/>
            <person name="Zhou L."/>
            <person name="Haft D.H."/>
            <person name="Selengut J.D."/>
            <person name="Davidsen T.M."/>
            <person name="Yang Q."/>
            <person name="Zafar N."/>
            <person name="Ward N.L."/>
        </authorList>
    </citation>
    <scope>NUCLEOTIDE SEQUENCE [LARGE SCALE GENOMIC DNA]</scope>
    <source>
        <strain>ATCC 15444</strain>
    </source>
</reference>
<gene>
    <name evidence="1" type="primary">metG</name>
    <name type="ordered locus">HNE_1831</name>
</gene>
<dbReference type="EC" id="6.1.1.10" evidence="1"/>
<dbReference type="EMBL" id="CP000158">
    <property type="protein sequence ID" value="ABI76400.1"/>
    <property type="molecule type" value="Genomic_DNA"/>
</dbReference>
<dbReference type="RefSeq" id="WP_011646832.1">
    <property type="nucleotide sequence ID" value="NC_008358.1"/>
</dbReference>
<dbReference type="SMR" id="Q0C161"/>
<dbReference type="STRING" id="228405.HNE_1831"/>
<dbReference type="KEGG" id="hne:HNE_1831"/>
<dbReference type="eggNOG" id="COG0143">
    <property type="taxonomic scope" value="Bacteria"/>
</dbReference>
<dbReference type="HOGENOM" id="CLU_009710_3_2_5"/>
<dbReference type="Proteomes" id="UP000001959">
    <property type="component" value="Chromosome"/>
</dbReference>
<dbReference type="GO" id="GO:0017101">
    <property type="term" value="C:aminoacyl-tRNA synthetase multienzyme complex"/>
    <property type="evidence" value="ECO:0007669"/>
    <property type="project" value="TreeGrafter"/>
</dbReference>
<dbReference type="GO" id="GO:0005829">
    <property type="term" value="C:cytosol"/>
    <property type="evidence" value="ECO:0007669"/>
    <property type="project" value="TreeGrafter"/>
</dbReference>
<dbReference type="GO" id="GO:0005524">
    <property type="term" value="F:ATP binding"/>
    <property type="evidence" value="ECO:0007669"/>
    <property type="project" value="UniProtKB-UniRule"/>
</dbReference>
<dbReference type="GO" id="GO:0046872">
    <property type="term" value="F:metal ion binding"/>
    <property type="evidence" value="ECO:0007669"/>
    <property type="project" value="UniProtKB-KW"/>
</dbReference>
<dbReference type="GO" id="GO:0004825">
    <property type="term" value="F:methionine-tRNA ligase activity"/>
    <property type="evidence" value="ECO:0007669"/>
    <property type="project" value="UniProtKB-UniRule"/>
</dbReference>
<dbReference type="GO" id="GO:0006431">
    <property type="term" value="P:methionyl-tRNA aminoacylation"/>
    <property type="evidence" value="ECO:0007669"/>
    <property type="project" value="UniProtKB-UniRule"/>
</dbReference>
<dbReference type="CDD" id="cd07957">
    <property type="entry name" value="Anticodon_Ia_Met"/>
    <property type="match status" value="1"/>
</dbReference>
<dbReference type="CDD" id="cd00814">
    <property type="entry name" value="MetRS_core"/>
    <property type="match status" value="1"/>
</dbReference>
<dbReference type="FunFam" id="2.20.28.20:FF:000001">
    <property type="entry name" value="Methionine--tRNA ligase"/>
    <property type="match status" value="1"/>
</dbReference>
<dbReference type="Gene3D" id="3.40.50.620">
    <property type="entry name" value="HUPs"/>
    <property type="match status" value="1"/>
</dbReference>
<dbReference type="Gene3D" id="1.10.730.10">
    <property type="entry name" value="Isoleucyl-tRNA Synthetase, Domain 1"/>
    <property type="match status" value="1"/>
</dbReference>
<dbReference type="Gene3D" id="2.20.28.20">
    <property type="entry name" value="Methionyl-tRNA synthetase, Zn-domain"/>
    <property type="match status" value="1"/>
</dbReference>
<dbReference type="HAMAP" id="MF_00098">
    <property type="entry name" value="Met_tRNA_synth_type1"/>
    <property type="match status" value="1"/>
</dbReference>
<dbReference type="InterPro" id="IPR041872">
    <property type="entry name" value="Anticodon_Met"/>
</dbReference>
<dbReference type="InterPro" id="IPR023458">
    <property type="entry name" value="Met-tRNA_ligase_1"/>
</dbReference>
<dbReference type="InterPro" id="IPR014758">
    <property type="entry name" value="Met-tRNA_synth"/>
</dbReference>
<dbReference type="InterPro" id="IPR015413">
    <property type="entry name" value="Methionyl/Leucyl_tRNA_Synth"/>
</dbReference>
<dbReference type="InterPro" id="IPR033911">
    <property type="entry name" value="MetRS_core"/>
</dbReference>
<dbReference type="InterPro" id="IPR029038">
    <property type="entry name" value="MetRS_Zn"/>
</dbReference>
<dbReference type="InterPro" id="IPR014729">
    <property type="entry name" value="Rossmann-like_a/b/a_fold"/>
</dbReference>
<dbReference type="InterPro" id="IPR009080">
    <property type="entry name" value="tRNAsynth_Ia_anticodon-bd"/>
</dbReference>
<dbReference type="NCBIfam" id="TIGR00398">
    <property type="entry name" value="metG"/>
    <property type="match status" value="1"/>
</dbReference>
<dbReference type="PANTHER" id="PTHR45765">
    <property type="entry name" value="METHIONINE--TRNA LIGASE"/>
    <property type="match status" value="1"/>
</dbReference>
<dbReference type="PANTHER" id="PTHR45765:SF1">
    <property type="entry name" value="METHIONINE--TRNA LIGASE, CYTOPLASMIC"/>
    <property type="match status" value="1"/>
</dbReference>
<dbReference type="Pfam" id="PF19303">
    <property type="entry name" value="Anticodon_3"/>
    <property type="match status" value="1"/>
</dbReference>
<dbReference type="Pfam" id="PF09334">
    <property type="entry name" value="tRNA-synt_1g"/>
    <property type="match status" value="1"/>
</dbReference>
<dbReference type="PRINTS" id="PR01041">
    <property type="entry name" value="TRNASYNTHMET"/>
</dbReference>
<dbReference type="SUPFAM" id="SSF47323">
    <property type="entry name" value="Anticodon-binding domain of a subclass of class I aminoacyl-tRNA synthetases"/>
    <property type="match status" value="1"/>
</dbReference>
<dbReference type="SUPFAM" id="SSF57770">
    <property type="entry name" value="Methionyl-tRNA synthetase (MetRS), Zn-domain"/>
    <property type="match status" value="1"/>
</dbReference>
<dbReference type="SUPFAM" id="SSF52374">
    <property type="entry name" value="Nucleotidylyl transferase"/>
    <property type="match status" value="1"/>
</dbReference>
<name>SYM_HYPNA</name>